<gene>
    <name evidence="1" type="primary">rps8</name>
    <name type="ordered locus">YN1551_1413</name>
</gene>
<evidence type="ECO:0000255" key="1">
    <source>
        <dbReference type="HAMAP-Rule" id="MF_01302"/>
    </source>
</evidence>
<evidence type="ECO:0000305" key="2"/>
<proteinExistence type="inferred from homology"/>
<protein>
    <recommendedName>
        <fullName evidence="1">Small ribosomal subunit protein uS8</fullName>
    </recommendedName>
    <alternativeName>
        <fullName evidence="2">30S ribosomal protein S8</fullName>
    </alternativeName>
</protein>
<reference key="1">
    <citation type="journal article" date="2009" name="Proc. Natl. Acad. Sci. U.S.A.">
        <title>Biogeography of the Sulfolobus islandicus pan-genome.</title>
        <authorList>
            <person name="Reno M.L."/>
            <person name="Held N.L."/>
            <person name="Fields C.J."/>
            <person name="Burke P.V."/>
            <person name="Whitaker R.J."/>
        </authorList>
    </citation>
    <scope>NUCLEOTIDE SEQUENCE [LARGE SCALE GENOMIC DNA]</scope>
    <source>
        <strain>Y.N.15.51 / Yellowstone #2</strain>
    </source>
</reference>
<sequence length="133" mass="15096">MVFVNPLANALTSIYNNEMRRNKQAIIMPASKLVINVLRVMQKEGYVGEFEYIDDGRWGKITVQLLGRVNKCGPITPRYPLSYRQMIALPDYIRRYLPSKEIGIIIVSTSKGVMSHKEAARMRLGGVALGYVY</sequence>
<keyword id="KW-0687">Ribonucleoprotein</keyword>
<keyword id="KW-0689">Ribosomal protein</keyword>
<keyword id="KW-0694">RNA-binding</keyword>
<keyword id="KW-0699">rRNA-binding</keyword>
<name>RS8_SACI1</name>
<accession>C3NH94</accession>
<comment type="function">
    <text evidence="1">One of the primary rRNA binding proteins, it binds directly to 16S rRNA central domain where it helps coordinate assembly of the platform of the 30S subunit.</text>
</comment>
<comment type="subunit">
    <text evidence="1">Part of the 30S ribosomal subunit.</text>
</comment>
<comment type="similarity">
    <text evidence="1">Belongs to the universal ribosomal protein uS8 family.</text>
</comment>
<organism>
    <name type="scientific">Saccharolobus islandicus (strain Y.N.15.51 / Yellowstone #2)</name>
    <name type="common">Sulfolobus islandicus</name>
    <dbReference type="NCBI Taxonomy" id="419942"/>
    <lineage>
        <taxon>Archaea</taxon>
        <taxon>Thermoproteota</taxon>
        <taxon>Thermoprotei</taxon>
        <taxon>Sulfolobales</taxon>
        <taxon>Sulfolobaceae</taxon>
        <taxon>Saccharolobus</taxon>
    </lineage>
</organism>
<feature type="chain" id="PRO_1000214270" description="Small ribosomal subunit protein uS8">
    <location>
        <begin position="1"/>
        <end position="133"/>
    </location>
</feature>
<dbReference type="EMBL" id="CP001404">
    <property type="protein sequence ID" value="ACP48504.1"/>
    <property type="molecule type" value="Genomic_DNA"/>
</dbReference>
<dbReference type="RefSeq" id="WP_012711433.1">
    <property type="nucleotide sequence ID" value="NC_012623.1"/>
</dbReference>
<dbReference type="SMR" id="C3NH94"/>
<dbReference type="KEGG" id="sin:YN1551_1413"/>
<dbReference type="HOGENOM" id="CLU_098428_1_1_2"/>
<dbReference type="Proteomes" id="UP000006818">
    <property type="component" value="Chromosome"/>
</dbReference>
<dbReference type="GO" id="GO:1990904">
    <property type="term" value="C:ribonucleoprotein complex"/>
    <property type="evidence" value="ECO:0007669"/>
    <property type="project" value="UniProtKB-KW"/>
</dbReference>
<dbReference type="GO" id="GO:0005840">
    <property type="term" value="C:ribosome"/>
    <property type="evidence" value="ECO:0007669"/>
    <property type="project" value="UniProtKB-KW"/>
</dbReference>
<dbReference type="GO" id="GO:0019843">
    <property type="term" value="F:rRNA binding"/>
    <property type="evidence" value="ECO:0007669"/>
    <property type="project" value="UniProtKB-UniRule"/>
</dbReference>
<dbReference type="GO" id="GO:0003735">
    <property type="term" value="F:structural constituent of ribosome"/>
    <property type="evidence" value="ECO:0007669"/>
    <property type="project" value="InterPro"/>
</dbReference>
<dbReference type="GO" id="GO:0006412">
    <property type="term" value="P:translation"/>
    <property type="evidence" value="ECO:0007669"/>
    <property type="project" value="UniProtKB-UniRule"/>
</dbReference>
<dbReference type="FunFam" id="3.30.1370.30:FF:000001">
    <property type="entry name" value="40S ribosomal protein S15a"/>
    <property type="match status" value="1"/>
</dbReference>
<dbReference type="Gene3D" id="3.30.1370.30">
    <property type="match status" value="1"/>
</dbReference>
<dbReference type="Gene3D" id="3.30.1490.10">
    <property type="match status" value="1"/>
</dbReference>
<dbReference type="HAMAP" id="MF_01302_A">
    <property type="entry name" value="Ribosomal_uS8_A"/>
    <property type="match status" value="1"/>
</dbReference>
<dbReference type="InterPro" id="IPR000630">
    <property type="entry name" value="Ribosomal_uS8"/>
</dbReference>
<dbReference type="InterPro" id="IPR047863">
    <property type="entry name" value="Ribosomal_uS8_CS"/>
</dbReference>
<dbReference type="InterPro" id="IPR035987">
    <property type="entry name" value="Ribosomal_uS8_sf"/>
</dbReference>
<dbReference type="NCBIfam" id="NF003115">
    <property type="entry name" value="PRK04034.1"/>
    <property type="match status" value="1"/>
</dbReference>
<dbReference type="PANTHER" id="PTHR11758">
    <property type="entry name" value="40S RIBOSOMAL PROTEIN S15A"/>
    <property type="match status" value="1"/>
</dbReference>
<dbReference type="Pfam" id="PF00410">
    <property type="entry name" value="Ribosomal_S8"/>
    <property type="match status" value="1"/>
</dbReference>
<dbReference type="SUPFAM" id="SSF56047">
    <property type="entry name" value="Ribosomal protein S8"/>
    <property type="match status" value="1"/>
</dbReference>
<dbReference type="PROSITE" id="PS00053">
    <property type="entry name" value="RIBOSOMAL_S8"/>
    <property type="match status" value="1"/>
</dbReference>